<proteinExistence type="inferred from homology"/>
<dbReference type="EMBL" id="AM114193">
    <property type="protein sequence ID" value="CAJ35379.1"/>
    <property type="molecule type" value="Genomic_DNA"/>
</dbReference>
<dbReference type="RefSeq" id="WP_012037113.1">
    <property type="nucleotide sequence ID" value="NC_009464.1"/>
</dbReference>
<dbReference type="SMR" id="Q0W8B4"/>
<dbReference type="STRING" id="351160.LRC420"/>
<dbReference type="GeneID" id="5145488"/>
<dbReference type="KEGG" id="rci:LRC420"/>
<dbReference type="eggNOG" id="arCOG01946">
    <property type="taxonomic scope" value="Archaea"/>
</dbReference>
<dbReference type="OrthoDB" id="7793at2157"/>
<dbReference type="Proteomes" id="UP000000663">
    <property type="component" value="Chromosome"/>
</dbReference>
<dbReference type="GO" id="GO:1990904">
    <property type="term" value="C:ribonucleoprotein complex"/>
    <property type="evidence" value="ECO:0007669"/>
    <property type="project" value="UniProtKB-KW"/>
</dbReference>
<dbReference type="GO" id="GO:0005840">
    <property type="term" value="C:ribosome"/>
    <property type="evidence" value="ECO:0007669"/>
    <property type="project" value="UniProtKB-KW"/>
</dbReference>
<dbReference type="GO" id="GO:0003735">
    <property type="term" value="F:structural constituent of ribosome"/>
    <property type="evidence" value="ECO:0007669"/>
    <property type="project" value="InterPro"/>
</dbReference>
<dbReference type="GO" id="GO:0006412">
    <property type="term" value="P:translation"/>
    <property type="evidence" value="ECO:0007669"/>
    <property type="project" value="UniProtKB-UniRule"/>
</dbReference>
<dbReference type="HAMAP" id="MF_00512">
    <property type="entry name" value="Ribosomal_eS6"/>
    <property type="match status" value="1"/>
</dbReference>
<dbReference type="InterPro" id="IPR001377">
    <property type="entry name" value="Ribosomal_eS6"/>
</dbReference>
<dbReference type="InterPro" id="IPR020924">
    <property type="entry name" value="Ribosomal_eS6_arc"/>
</dbReference>
<dbReference type="InterPro" id="IPR018282">
    <property type="entry name" value="Ribosomal_eS6_CS"/>
</dbReference>
<dbReference type="NCBIfam" id="NF003294">
    <property type="entry name" value="PRK04290.1-3"/>
    <property type="match status" value="1"/>
</dbReference>
<dbReference type="PANTHER" id="PTHR11502">
    <property type="entry name" value="40S RIBOSOMAL PROTEIN S6"/>
    <property type="match status" value="1"/>
</dbReference>
<dbReference type="Pfam" id="PF01092">
    <property type="entry name" value="Ribosomal_S6e"/>
    <property type="match status" value="1"/>
</dbReference>
<dbReference type="SMART" id="SM01405">
    <property type="entry name" value="Ribosomal_S6e"/>
    <property type="match status" value="1"/>
</dbReference>
<dbReference type="PROSITE" id="PS00578">
    <property type="entry name" value="RIBOSOMAL_S6E"/>
    <property type="match status" value="1"/>
</dbReference>
<name>RS6E_METAR</name>
<protein>
    <recommendedName>
        <fullName evidence="1">Small ribosomal subunit protein eS6</fullName>
    </recommendedName>
    <alternativeName>
        <fullName evidence="3">30S ribosomal protein S6e</fullName>
    </alternativeName>
</protein>
<sequence length="142" mass="15082">MADFKLVVSDPKTGKAYNVDVTGPRVNKFIGKPIGSEIDGETAGLPGYKLIITGGSDKDGIPMRGDIPGQVRRRVLVSGGIGYHPTENGMRRRKLLRGDEISAEIVQVNATVAAYGEKPLDELAPKKEKKEGAAGGRAPAKK</sequence>
<comment type="similarity">
    <text evidence="1">Belongs to the eukaryotic ribosomal protein eS6 family.</text>
</comment>
<keyword id="KW-1185">Reference proteome</keyword>
<keyword id="KW-0687">Ribonucleoprotein</keyword>
<keyword id="KW-0689">Ribosomal protein</keyword>
<accession>Q0W8B4</accession>
<feature type="chain" id="PRO_1000050644" description="Small ribosomal subunit protein eS6">
    <location>
        <begin position="1"/>
        <end position="142"/>
    </location>
</feature>
<feature type="region of interest" description="Disordered" evidence="2">
    <location>
        <begin position="117"/>
        <end position="142"/>
    </location>
</feature>
<feature type="compositionally biased region" description="Basic and acidic residues" evidence="2">
    <location>
        <begin position="118"/>
        <end position="132"/>
    </location>
</feature>
<gene>
    <name evidence="1" type="primary">rps6e</name>
    <name type="ordered locus">UNCMA_27980</name>
    <name type="ORF">LRC420</name>
</gene>
<organism>
    <name type="scientific">Methanocella arvoryzae (strain DSM 22066 / NBRC 105507 / MRE50)</name>
    <dbReference type="NCBI Taxonomy" id="351160"/>
    <lineage>
        <taxon>Archaea</taxon>
        <taxon>Methanobacteriati</taxon>
        <taxon>Methanobacteriota</taxon>
        <taxon>Stenosarchaea group</taxon>
        <taxon>Methanomicrobia</taxon>
        <taxon>Methanocellales</taxon>
        <taxon>Methanocellaceae</taxon>
        <taxon>Methanocella</taxon>
    </lineage>
</organism>
<evidence type="ECO:0000255" key="1">
    <source>
        <dbReference type="HAMAP-Rule" id="MF_00512"/>
    </source>
</evidence>
<evidence type="ECO:0000256" key="2">
    <source>
        <dbReference type="SAM" id="MobiDB-lite"/>
    </source>
</evidence>
<evidence type="ECO:0000305" key="3"/>
<reference key="1">
    <citation type="journal article" date="2006" name="Science">
        <title>Genome of rice cluster I archaea -- the key methane producers in the rice rhizosphere.</title>
        <authorList>
            <person name="Erkel C."/>
            <person name="Kube M."/>
            <person name="Reinhardt R."/>
            <person name="Liesack W."/>
        </authorList>
    </citation>
    <scope>NUCLEOTIDE SEQUENCE [LARGE SCALE GENOMIC DNA]</scope>
    <source>
        <strain>DSM 22066 / NBRC 105507 / MRE50</strain>
    </source>
</reference>